<comment type="function">
    <text evidence="1">CRISPR (clustered regularly interspaced short palindromic repeat), is an adaptive immune system that provides protection against mobile genetic elements (viruses, transposable elements and conjugative plasmids). CRISPR clusters contain sequences complementary to antecedent mobile elements and target invading nucleic acids. CRISPR clusters are transcribed and processed into CRISPR RNA (crRNA). Functions as a ssRNA-specific endoribonuclease. Involved in the integration of spacer DNA into the CRISPR cassette.</text>
</comment>
<comment type="cofactor">
    <cofactor evidence="1">
        <name>Mg(2+)</name>
        <dbReference type="ChEBI" id="CHEBI:18420"/>
    </cofactor>
</comment>
<comment type="subunit">
    <text evidence="1">Homodimer, forms a heterotetramer with a Cas1 homodimer.</text>
</comment>
<comment type="similarity">
    <text evidence="1">Belongs to the CRISPR-associated endoribonuclease Cas2 protein family.</text>
</comment>
<comment type="sequence caution" evidence="2">
    <conflict type="erroneous initiation">
        <sequence resource="EMBL-CDS" id="BAI42644"/>
    </conflict>
    <text>Truncated N-terminus.</text>
</comment>
<proteinExistence type="inferred from homology"/>
<name>CAS2_LACRG</name>
<accession>C7TEQ4</accession>
<accession>C8UW90</accession>
<dbReference type="EC" id="3.1.-.-" evidence="1"/>
<dbReference type="EMBL" id="FM179322">
    <property type="protein sequence ID" value="CAR88097.1"/>
    <property type="molecule type" value="Genomic_DNA"/>
</dbReference>
<dbReference type="EMBL" id="AP011548">
    <property type="protein sequence ID" value="BAI42644.1"/>
    <property type="status" value="ALT_INIT"/>
    <property type="molecule type" value="Genomic_DNA"/>
</dbReference>
<dbReference type="RefSeq" id="WP_015765030.1">
    <property type="nucleotide sequence ID" value="NZ_CP173696.1"/>
</dbReference>
<dbReference type="SMR" id="C7TEQ4"/>
<dbReference type="KEGG" id="lrg:LRHM_2117"/>
<dbReference type="KEGG" id="lrh:LGG_02202"/>
<dbReference type="PATRIC" id="fig|568703.30.peg.2213"/>
<dbReference type="HOGENOM" id="CLU_150500_1_0_9"/>
<dbReference type="Proteomes" id="UP000002067">
    <property type="component" value="Chromosome"/>
</dbReference>
<dbReference type="GO" id="GO:0046872">
    <property type="term" value="F:metal ion binding"/>
    <property type="evidence" value="ECO:0007669"/>
    <property type="project" value="UniProtKB-UniRule"/>
</dbReference>
<dbReference type="GO" id="GO:0004521">
    <property type="term" value="F:RNA endonuclease activity"/>
    <property type="evidence" value="ECO:0007669"/>
    <property type="project" value="InterPro"/>
</dbReference>
<dbReference type="GO" id="GO:0051607">
    <property type="term" value="P:defense response to virus"/>
    <property type="evidence" value="ECO:0007669"/>
    <property type="project" value="UniProtKB-UniRule"/>
</dbReference>
<dbReference type="GO" id="GO:0043571">
    <property type="term" value="P:maintenance of CRISPR repeat elements"/>
    <property type="evidence" value="ECO:0007669"/>
    <property type="project" value="UniProtKB-UniRule"/>
</dbReference>
<dbReference type="HAMAP" id="MF_01471">
    <property type="entry name" value="Cas2"/>
    <property type="match status" value="1"/>
</dbReference>
<dbReference type="InterPro" id="IPR021127">
    <property type="entry name" value="CRISPR_associated_Cas2"/>
</dbReference>
<dbReference type="InterPro" id="IPR019199">
    <property type="entry name" value="Virulence_VapD/CRISPR_Cas2"/>
</dbReference>
<dbReference type="NCBIfam" id="TIGR01573">
    <property type="entry name" value="cas2"/>
    <property type="match status" value="1"/>
</dbReference>
<dbReference type="Pfam" id="PF09827">
    <property type="entry name" value="CRISPR_Cas2"/>
    <property type="match status" value="1"/>
</dbReference>
<dbReference type="SUPFAM" id="SSF143430">
    <property type="entry name" value="TTP0101/SSO1404-like"/>
    <property type="match status" value="1"/>
</dbReference>
<organism>
    <name type="scientific">Lacticaseibacillus rhamnosus (strain ATCC 53103 / LMG 18243 / GG)</name>
    <name type="common">Lactobacillus rhamnosus</name>
    <dbReference type="NCBI Taxonomy" id="568703"/>
    <lineage>
        <taxon>Bacteria</taxon>
        <taxon>Bacillati</taxon>
        <taxon>Bacillota</taxon>
        <taxon>Bacilli</taxon>
        <taxon>Lactobacillales</taxon>
        <taxon>Lactobacillaceae</taxon>
        <taxon>Lacticaseibacillus</taxon>
    </lineage>
</organism>
<sequence length="101" mass="11874">MRLMIMFDLPVATSKDRRNYRRFRRALIDEGFLMIQYSVYVRVCKTKKSAAYMEQRIATVKPPTGIVQTLMVTEAQYQSMHFMVGTEKQDIRNSADRTVMI</sequence>
<protein>
    <recommendedName>
        <fullName evidence="1">CRISPR-associated endoribonuclease Cas2</fullName>
        <ecNumber evidence="1">3.1.-.-</ecNumber>
    </recommendedName>
</protein>
<keyword id="KW-0051">Antiviral defense</keyword>
<keyword id="KW-0255">Endonuclease</keyword>
<keyword id="KW-0378">Hydrolase</keyword>
<keyword id="KW-0460">Magnesium</keyword>
<keyword id="KW-0479">Metal-binding</keyword>
<keyword id="KW-0540">Nuclease</keyword>
<feature type="chain" id="PRO_0000417716" description="CRISPR-associated endoribonuclease Cas2">
    <location>
        <begin position="1"/>
        <end position="101"/>
    </location>
</feature>
<feature type="binding site" evidence="1">
    <location>
        <position position="8"/>
    </location>
    <ligand>
        <name>Mg(2+)</name>
        <dbReference type="ChEBI" id="CHEBI:18420"/>
        <note>catalytic</note>
    </ligand>
</feature>
<reference key="1">
    <citation type="journal article" date="2009" name="Proc. Natl. Acad. Sci. U.S.A.">
        <title>Comparative genomic analysis of Lactobacillus rhamnosus GG reveals pili containing a human- mucus binding protein.</title>
        <authorList>
            <person name="Kankainen M."/>
            <person name="Paulin L."/>
            <person name="Tynkkynen S."/>
            <person name="von Ossowski I."/>
            <person name="Reunanen J."/>
            <person name="Partanen P."/>
            <person name="Satokari R."/>
            <person name="Vesterlund S."/>
            <person name="Hendrickx A.P."/>
            <person name="Lebeer S."/>
            <person name="De Keersmaecker S.C."/>
            <person name="Vanderleyden J."/>
            <person name="Hamalainen T."/>
            <person name="Laukkanen S."/>
            <person name="Salovuori N."/>
            <person name="Ritari J."/>
            <person name="Alatalo E."/>
            <person name="Korpela R."/>
            <person name="Mattila-Sandholm T."/>
            <person name="Lassig A."/>
            <person name="Hatakka K."/>
            <person name="Kinnunen K.T."/>
            <person name="Karjalainen H."/>
            <person name="Saxelin M."/>
            <person name="Laakso K."/>
            <person name="Surakka A."/>
            <person name="Palva A."/>
            <person name="Salusjarvi T."/>
            <person name="Auvinen P."/>
            <person name="de Vos W.M."/>
        </authorList>
    </citation>
    <scope>NUCLEOTIDE SEQUENCE [LARGE SCALE GENOMIC DNA]</scope>
    <source>
        <strain>ATCC 53103 / LMG 18243 / GG</strain>
    </source>
</reference>
<reference key="2">
    <citation type="journal article" date="2009" name="J. Bacteriol.">
        <title>Complete genome sequence of the probiotic Lactobacillus rhamnosus ATCC 53103.</title>
        <authorList>
            <person name="Morita H."/>
            <person name="Toh H."/>
            <person name="Oshima K."/>
            <person name="Murakami M."/>
            <person name="Taylor T.D."/>
            <person name="Igimi S."/>
            <person name="Hattori M."/>
        </authorList>
    </citation>
    <scope>NUCLEOTIDE SEQUENCE [LARGE SCALE GENOMIC DNA]</scope>
    <source>
        <strain>ATCC 53103 / LMG 18243 / GG</strain>
    </source>
</reference>
<evidence type="ECO:0000255" key="1">
    <source>
        <dbReference type="HAMAP-Rule" id="MF_01471"/>
    </source>
</evidence>
<evidence type="ECO:0000305" key="2"/>
<gene>
    <name evidence="1" type="primary">cas2</name>
    <name type="ordered locus">LGG_02202</name>
    <name type="ordered locus">LRHM_2117</name>
</gene>